<comment type="function">
    <text evidence="1">Catalyzes the conversion of L-arabinose to L-ribulose.</text>
</comment>
<comment type="catalytic activity">
    <reaction evidence="1">
        <text>beta-L-arabinopyranose = L-ribulose</text>
        <dbReference type="Rhea" id="RHEA:14821"/>
        <dbReference type="ChEBI" id="CHEBI:16880"/>
        <dbReference type="ChEBI" id="CHEBI:40886"/>
        <dbReference type="EC" id="5.3.1.4"/>
    </reaction>
</comment>
<comment type="cofactor">
    <cofactor evidence="1">
        <name>Mn(2+)</name>
        <dbReference type="ChEBI" id="CHEBI:29035"/>
    </cofactor>
    <text evidence="1">Binds 1 Mn(2+) ion per subunit.</text>
</comment>
<comment type="pathway">
    <text evidence="1">Carbohydrate degradation; L-arabinose degradation via L-ribulose; D-xylulose 5-phosphate from L-arabinose (bacterial route): step 1/3.</text>
</comment>
<comment type="subunit">
    <text evidence="1">Homohexamer.</text>
</comment>
<comment type="similarity">
    <text evidence="1">Belongs to the arabinose isomerase family.</text>
</comment>
<evidence type="ECO:0000255" key="1">
    <source>
        <dbReference type="HAMAP-Rule" id="MF_00519"/>
    </source>
</evidence>
<proteinExistence type="inferred from homology"/>
<name>ARAA_YERE8</name>
<organism>
    <name type="scientific">Yersinia enterocolitica serotype O:8 / biotype 1B (strain NCTC 13174 / 8081)</name>
    <dbReference type="NCBI Taxonomy" id="393305"/>
    <lineage>
        <taxon>Bacteria</taxon>
        <taxon>Pseudomonadati</taxon>
        <taxon>Pseudomonadota</taxon>
        <taxon>Gammaproteobacteria</taxon>
        <taxon>Enterobacterales</taxon>
        <taxon>Yersiniaceae</taxon>
        <taxon>Yersinia</taxon>
    </lineage>
</organism>
<accession>A1JMB6</accession>
<reference key="1">
    <citation type="journal article" date="2006" name="PLoS Genet.">
        <title>The complete genome sequence and comparative genome analysis of the high pathogenicity Yersinia enterocolitica strain 8081.</title>
        <authorList>
            <person name="Thomson N.R."/>
            <person name="Howard S."/>
            <person name="Wren B.W."/>
            <person name="Holden M.T.G."/>
            <person name="Crossman L."/>
            <person name="Challis G.L."/>
            <person name="Churcher C."/>
            <person name="Mungall K."/>
            <person name="Brooks K."/>
            <person name="Chillingworth T."/>
            <person name="Feltwell T."/>
            <person name="Abdellah Z."/>
            <person name="Hauser H."/>
            <person name="Jagels K."/>
            <person name="Maddison M."/>
            <person name="Moule S."/>
            <person name="Sanders M."/>
            <person name="Whitehead S."/>
            <person name="Quail M.A."/>
            <person name="Dougan G."/>
            <person name="Parkhill J."/>
            <person name="Prentice M.B."/>
        </authorList>
    </citation>
    <scope>NUCLEOTIDE SEQUENCE [LARGE SCALE GENOMIC DNA]</scope>
    <source>
        <strain>NCTC 13174 / 8081</strain>
    </source>
</reference>
<keyword id="KW-0054">Arabinose catabolism</keyword>
<keyword id="KW-0119">Carbohydrate metabolism</keyword>
<keyword id="KW-0413">Isomerase</keyword>
<keyword id="KW-0464">Manganese</keyword>
<keyword id="KW-0479">Metal-binding</keyword>
<gene>
    <name evidence="1" type="primary">araA</name>
    <name type="ordered locus">YE2001</name>
</gene>
<protein>
    <recommendedName>
        <fullName evidence="1">L-arabinose isomerase</fullName>
        <ecNumber evidence="1">5.3.1.4</ecNumber>
    </recommendedName>
</protein>
<feature type="chain" id="PRO_0000312623" description="L-arabinose isomerase">
    <location>
        <begin position="1"/>
        <end position="500"/>
    </location>
</feature>
<feature type="binding site" evidence="1">
    <location>
        <position position="306"/>
    </location>
    <ligand>
        <name>Mn(2+)</name>
        <dbReference type="ChEBI" id="CHEBI:29035"/>
    </ligand>
</feature>
<feature type="binding site" evidence="1">
    <location>
        <position position="333"/>
    </location>
    <ligand>
        <name>Mn(2+)</name>
        <dbReference type="ChEBI" id="CHEBI:29035"/>
    </ligand>
</feature>
<feature type="binding site" evidence="1">
    <location>
        <position position="350"/>
    </location>
    <ligand>
        <name>Mn(2+)</name>
        <dbReference type="ChEBI" id="CHEBI:29035"/>
    </ligand>
</feature>
<feature type="binding site" evidence="1">
    <location>
        <position position="450"/>
    </location>
    <ligand>
        <name>Mn(2+)</name>
        <dbReference type="ChEBI" id="CHEBI:29035"/>
    </ligand>
</feature>
<dbReference type="EC" id="5.3.1.4" evidence="1"/>
<dbReference type="EMBL" id="AM286415">
    <property type="protein sequence ID" value="CAL12079.1"/>
    <property type="molecule type" value="Genomic_DNA"/>
</dbReference>
<dbReference type="RefSeq" id="WP_011816285.1">
    <property type="nucleotide sequence ID" value="NC_008800.1"/>
</dbReference>
<dbReference type="RefSeq" id="YP_001006253.1">
    <property type="nucleotide sequence ID" value="NC_008800.1"/>
</dbReference>
<dbReference type="SMR" id="A1JMB6"/>
<dbReference type="KEGG" id="yen:YE2001"/>
<dbReference type="PATRIC" id="fig|393305.7.peg.2163"/>
<dbReference type="eggNOG" id="COG2160">
    <property type="taxonomic scope" value="Bacteria"/>
</dbReference>
<dbReference type="HOGENOM" id="CLU_045663_0_0_6"/>
<dbReference type="OrthoDB" id="9765600at2"/>
<dbReference type="UniPathway" id="UPA00145">
    <property type="reaction ID" value="UER00565"/>
</dbReference>
<dbReference type="Proteomes" id="UP000000642">
    <property type="component" value="Chromosome"/>
</dbReference>
<dbReference type="GO" id="GO:0005829">
    <property type="term" value="C:cytosol"/>
    <property type="evidence" value="ECO:0007669"/>
    <property type="project" value="TreeGrafter"/>
</dbReference>
<dbReference type="GO" id="GO:0008733">
    <property type="term" value="F:L-arabinose isomerase activity"/>
    <property type="evidence" value="ECO:0007669"/>
    <property type="project" value="UniProtKB-UniRule"/>
</dbReference>
<dbReference type="GO" id="GO:0030145">
    <property type="term" value="F:manganese ion binding"/>
    <property type="evidence" value="ECO:0007669"/>
    <property type="project" value="UniProtKB-UniRule"/>
</dbReference>
<dbReference type="GO" id="GO:0019569">
    <property type="term" value="P:L-arabinose catabolic process to xylulose 5-phosphate"/>
    <property type="evidence" value="ECO:0007669"/>
    <property type="project" value="UniProtKB-UniRule"/>
</dbReference>
<dbReference type="CDD" id="cd03557">
    <property type="entry name" value="L-arabinose_isomerase"/>
    <property type="match status" value="1"/>
</dbReference>
<dbReference type="FunFam" id="3.40.50.10940:FF:000001">
    <property type="entry name" value="L-arabinose isomerase"/>
    <property type="match status" value="1"/>
</dbReference>
<dbReference type="Gene3D" id="3.40.50.10940">
    <property type="match status" value="1"/>
</dbReference>
<dbReference type="HAMAP" id="MF_00519">
    <property type="entry name" value="Arabinose_Isome"/>
    <property type="match status" value="1"/>
</dbReference>
<dbReference type="InterPro" id="IPR024664">
    <property type="entry name" value="Ara_Isoase_C"/>
</dbReference>
<dbReference type="InterPro" id="IPR055390">
    <property type="entry name" value="AraA_central"/>
</dbReference>
<dbReference type="InterPro" id="IPR055389">
    <property type="entry name" value="AraA_N"/>
</dbReference>
<dbReference type="InterPro" id="IPR038583">
    <property type="entry name" value="AraA_N_sf"/>
</dbReference>
<dbReference type="InterPro" id="IPR004216">
    <property type="entry name" value="Fuc/Ara_isomerase_C"/>
</dbReference>
<dbReference type="InterPro" id="IPR009015">
    <property type="entry name" value="Fucose_isomerase_N/cen_sf"/>
</dbReference>
<dbReference type="InterPro" id="IPR003762">
    <property type="entry name" value="Lara_isomerase"/>
</dbReference>
<dbReference type="NCBIfam" id="NF002795">
    <property type="entry name" value="PRK02929.1"/>
    <property type="match status" value="1"/>
</dbReference>
<dbReference type="PANTHER" id="PTHR38464">
    <property type="entry name" value="L-ARABINOSE ISOMERASE"/>
    <property type="match status" value="1"/>
</dbReference>
<dbReference type="PANTHER" id="PTHR38464:SF1">
    <property type="entry name" value="L-ARABINOSE ISOMERASE"/>
    <property type="match status" value="1"/>
</dbReference>
<dbReference type="Pfam" id="PF24856">
    <property type="entry name" value="AraA_central"/>
    <property type="match status" value="1"/>
</dbReference>
<dbReference type="Pfam" id="PF02610">
    <property type="entry name" value="AraA_N"/>
    <property type="match status" value="1"/>
</dbReference>
<dbReference type="Pfam" id="PF11762">
    <property type="entry name" value="Arabinose_Iso_C"/>
    <property type="match status" value="1"/>
</dbReference>
<dbReference type="PIRSF" id="PIRSF001478">
    <property type="entry name" value="L-ara_isomerase"/>
    <property type="match status" value="1"/>
</dbReference>
<dbReference type="SUPFAM" id="SSF50443">
    <property type="entry name" value="FucI/AraA C-terminal domain-like"/>
    <property type="match status" value="1"/>
</dbReference>
<dbReference type="SUPFAM" id="SSF53743">
    <property type="entry name" value="FucI/AraA N-terminal and middle domains"/>
    <property type="match status" value="1"/>
</dbReference>
<sequence>MDVFKQSEVWFVIGSQNLYGPKTLQQVMDNAHHVVNSLNSEAGLPVKLVLKPLVTTPDEITALCREANYDTACIGVMTWLHTFSPAKMWIGGLSILHKPLLQFHTQFNAQIPWETMDMDFMNLNQTAHGGREFGFIGARMRQQHSVITGHWQDKEAHQRISQWMRVAAAKQENQQLKVARFGDNMREVAVTEGDKVAAQIQFGYSVNAYGIGDLVTVVDAVSKGEIDALVEEYEATYRLTDAVQLHGNKRENLLDAARIELGMKRFLEQGGFKAFTTNFENLYGLKQLPGLAVQRLMQQGYGFGGEGDWKTAALLRILKVMGTGLKGGTSFMEDYTYNFQPGNDLVVGSHMLEVCPSIAKEEKPLLDVQHLGIGGKADPARLIFSTPAGPALNASLIDMGNRFRLLVNVVDTVEQPHPLPKLPVARAIWQAQPSLATAAEAWIIAGGAHHTVFSQAIGVDELRLYAEMHGIEFLLIDNDTTLPAFKNEIRWNEVYYHLNR</sequence>